<name>YQCG_ECOLI</name>
<feature type="chain" id="PRO_0000381988" description="Uncharacterized protein YqcG">
    <location>
        <begin position="1"/>
        <end position="46"/>
    </location>
</feature>
<sequence>MSEENKENGFNHVKTFTKIIFIFSVLVFNDNEYKITDAAVNLFIQI</sequence>
<reference key="1">
    <citation type="journal article" date="1997" name="Science">
        <title>The complete genome sequence of Escherichia coli K-12.</title>
        <authorList>
            <person name="Blattner F.R."/>
            <person name="Plunkett G. III"/>
            <person name="Bloch C.A."/>
            <person name="Perna N.T."/>
            <person name="Burland V."/>
            <person name="Riley M."/>
            <person name="Collado-Vides J."/>
            <person name="Glasner J.D."/>
            <person name="Rode C.K."/>
            <person name="Mayhew G.F."/>
            <person name="Gregor J."/>
            <person name="Davis N.W."/>
            <person name="Kirkpatrick H.A."/>
            <person name="Goeden M.A."/>
            <person name="Rose D.J."/>
            <person name="Mau B."/>
            <person name="Shao Y."/>
        </authorList>
    </citation>
    <scope>NUCLEOTIDE SEQUENCE [LARGE SCALE GENOMIC DNA]</scope>
    <source>
        <strain>K12 / MG1655 / ATCC 47076</strain>
    </source>
</reference>
<reference key="2">
    <citation type="journal article" date="2006" name="Mol. Syst. Biol.">
        <title>Highly accurate genome sequences of Escherichia coli K-12 strains MG1655 and W3110.</title>
        <authorList>
            <person name="Hayashi K."/>
            <person name="Morooka N."/>
            <person name="Yamamoto Y."/>
            <person name="Fujita K."/>
            <person name="Isono K."/>
            <person name="Choi S."/>
            <person name="Ohtsubo E."/>
            <person name="Baba T."/>
            <person name="Wanner B.L."/>
            <person name="Mori H."/>
            <person name="Horiuchi T."/>
        </authorList>
    </citation>
    <scope>NUCLEOTIDE SEQUENCE [LARGE SCALE GENOMIC DNA]</scope>
    <source>
        <strain>K12 / W3110 / ATCC 27325 / DSM 5911</strain>
    </source>
</reference>
<reference key="3">
    <citation type="journal article" date="2008" name="Mol. Microbiol.">
        <title>Small membrane proteins found by comparative genomics and ribosome binding site models.</title>
        <authorList>
            <person name="Hemm M.R."/>
            <person name="Paul B.J."/>
            <person name="Schneider T.D."/>
            <person name="Storz G."/>
            <person name="Rudd K.E."/>
        </authorList>
    </citation>
    <scope>IDENTIFICATION</scope>
    <scope>INDUCTION</scope>
    <source>
        <strain>K12 / MG1655 / ATCC 47076</strain>
    </source>
</reference>
<keyword id="KW-1185">Reference proteome</keyword>
<proteinExistence type="evidence at protein level"/>
<comment type="induction">
    <text evidence="1">In exponential phase (at protein level).</text>
</comment>
<dbReference type="EMBL" id="U00096">
    <property type="protein sequence ID" value="ACO60004.1"/>
    <property type="molecule type" value="Genomic_DNA"/>
</dbReference>
<dbReference type="EMBL" id="AP009048">
    <property type="status" value="NOT_ANNOTATED_CDS"/>
    <property type="molecule type" value="Genomic_DNA"/>
</dbReference>
<dbReference type="RefSeq" id="WP_001288228.1">
    <property type="nucleotide sequence ID" value="NZ_LN832404.1"/>
</dbReference>
<dbReference type="RefSeq" id="YP_002791252.1">
    <property type="nucleotide sequence ID" value="NC_000913.3"/>
</dbReference>
<dbReference type="STRING" id="511145.b4682"/>
<dbReference type="PaxDb" id="511145-b4682"/>
<dbReference type="EnsemblBacteria" id="ACO60004">
    <property type="protein sequence ID" value="ACO60004"/>
    <property type="gene ID" value="b4682"/>
</dbReference>
<dbReference type="GeneID" id="7751618"/>
<dbReference type="KEGG" id="eco:b4682"/>
<dbReference type="KEGG" id="ecoc:C3026_15255"/>
<dbReference type="PATRIC" id="fig|511145.12.peg.2877"/>
<dbReference type="InParanoid" id="C1P612"/>
<dbReference type="BioCyc" id="EcoCyc:MONOMER0-2882"/>
<dbReference type="PRO" id="PR:C1P612"/>
<dbReference type="Proteomes" id="UP000000625">
    <property type="component" value="Chromosome"/>
</dbReference>
<dbReference type="GO" id="GO:0036460">
    <property type="term" value="P:cellular response to cell envelope stress"/>
    <property type="evidence" value="ECO:0000315"/>
    <property type="project" value="EcoCyc"/>
</dbReference>
<accession>C1P612</accession>
<organism>
    <name type="scientific">Escherichia coli (strain K12)</name>
    <dbReference type="NCBI Taxonomy" id="83333"/>
    <lineage>
        <taxon>Bacteria</taxon>
        <taxon>Pseudomonadati</taxon>
        <taxon>Pseudomonadota</taxon>
        <taxon>Gammaproteobacteria</taxon>
        <taxon>Enterobacterales</taxon>
        <taxon>Enterobacteriaceae</taxon>
        <taxon>Escherichia</taxon>
    </lineage>
</organism>
<protein>
    <recommendedName>
        <fullName>Uncharacterized protein YqcG</fullName>
    </recommendedName>
</protein>
<gene>
    <name type="primary">yqcG</name>
    <name type="ordered locus">b4682</name>
    <name type="ordered locus">JW2748.1</name>
</gene>
<evidence type="ECO:0000269" key="1">
    <source>
    </source>
</evidence>